<organism>
    <name type="scientific">Conus pictus</name>
    <name type="common">Cone snail</name>
    <dbReference type="NCBI Taxonomy" id="1042615"/>
    <lineage>
        <taxon>Eukaryota</taxon>
        <taxon>Metazoa</taxon>
        <taxon>Spiralia</taxon>
        <taxon>Lophotrochozoa</taxon>
        <taxon>Mollusca</taxon>
        <taxon>Gastropoda</taxon>
        <taxon>Caenogastropoda</taxon>
        <taxon>Neogastropoda</taxon>
        <taxon>Conoidea</taxon>
        <taxon>Conidae</taxon>
        <taxon>Conus</taxon>
        <taxon>Sciteconus</taxon>
    </lineage>
</organism>
<proteinExistence type="evidence at protein level"/>
<accession>P0DM99</accession>
<keyword id="KW-0903">Direct protein sequencing</keyword>
<keyword id="KW-1015">Disulfide bond</keyword>
<keyword id="KW-0964">Secreted</keyword>
<keyword id="KW-0800">Toxin</keyword>
<evidence type="ECO:0000250" key="1">
    <source>
        <dbReference type="UniProtKB" id="P56636"/>
    </source>
</evidence>
<evidence type="ECO:0000269" key="2">
    <source>
    </source>
</evidence>
<evidence type="ECO:0000303" key="3">
    <source>
    </source>
</evidence>
<evidence type="ECO:0000305" key="4"/>
<evidence type="ECO:0000305" key="5">
    <source>
    </source>
</evidence>
<name>CU1A_CONPB</name>
<sequence>DECCAIPFCAKIFPGRCP</sequence>
<protein>
    <recommendedName>
        <fullName evidence="3">Conotoxin pc1A</fullName>
    </recommendedName>
</protein>
<dbReference type="ConoServer" id="5856">
    <property type="toxin name" value="Pc1a"/>
</dbReference>
<dbReference type="GO" id="GO:0005576">
    <property type="term" value="C:extracellular region"/>
    <property type="evidence" value="ECO:0007669"/>
    <property type="project" value="UniProtKB-SubCell"/>
</dbReference>
<dbReference type="GO" id="GO:0090729">
    <property type="term" value="F:toxin activity"/>
    <property type="evidence" value="ECO:0007669"/>
    <property type="project" value="UniProtKB-KW"/>
</dbReference>
<comment type="subcellular location">
    <subcellularLocation>
        <location evidence="2">Secreted</location>
    </subcellularLocation>
</comment>
<comment type="tissue specificity">
    <text evidence="5">Expressed by the venom duct.</text>
</comment>
<comment type="domain">
    <text evidence="4">The cysteine framework is I (CC-C-C). Alpha4/7 pattern.</text>
</comment>
<comment type="mass spectrometry">
    <text>monoisotopic.</text>
</comment>
<reference key="1">
    <citation type="journal article" date="2013" name="Peptides">
        <title>Unraveling the peptidome of the South African cone snails Conus pictus and Conus natalis.</title>
        <authorList>
            <person name="Peigneur S."/>
            <person name="Van Der Haegen A."/>
            <person name="Moller C."/>
            <person name="Waelkens E."/>
            <person name="Diego-Garcia E."/>
            <person name="Mari F."/>
            <person name="Naude R."/>
            <person name="Tytgat J."/>
        </authorList>
    </citation>
    <scope>PROTEIN SEQUENCE</scope>
    <scope>MASS SPECTROMETRY</scope>
    <scope>SUBCELLULAR LOCATION</scope>
    <source>
        <tissue>Venom</tissue>
    </source>
</reference>
<feature type="peptide" id="PRO_0000424796" description="Conotoxin pc1A" evidence="2">
    <location>
        <begin position="1"/>
        <end position="18"/>
    </location>
</feature>
<feature type="disulfide bond" evidence="1">
    <location>
        <begin position="3"/>
        <end position="9"/>
    </location>
</feature>
<feature type="disulfide bond" evidence="1">
    <location>
        <begin position="4"/>
        <end position="17"/>
    </location>
</feature>